<reference key="1">
    <citation type="journal article" date="2002" name="Nature">
        <title>The genome sequence of Schizosaccharomyces pombe.</title>
        <authorList>
            <person name="Wood V."/>
            <person name="Gwilliam R."/>
            <person name="Rajandream M.A."/>
            <person name="Lyne M.H."/>
            <person name="Lyne R."/>
            <person name="Stewart A."/>
            <person name="Sgouros J.G."/>
            <person name="Peat N."/>
            <person name="Hayles J."/>
            <person name="Baker S.G."/>
            <person name="Basham D."/>
            <person name="Bowman S."/>
            <person name="Brooks K."/>
            <person name="Brown D."/>
            <person name="Brown S."/>
            <person name="Chillingworth T."/>
            <person name="Churcher C.M."/>
            <person name="Collins M."/>
            <person name="Connor R."/>
            <person name="Cronin A."/>
            <person name="Davis P."/>
            <person name="Feltwell T."/>
            <person name="Fraser A."/>
            <person name="Gentles S."/>
            <person name="Goble A."/>
            <person name="Hamlin N."/>
            <person name="Harris D.E."/>
            <person name="Hidalgo J."/>
            <person name="Hodgson G."/>
            <person name="Holroyd S."/>
            <person name="Hornsby T."/>
            <person name="Howarth S."/>
            <person name="Huckle E.J."/>
            <person name="Hunt S."/>
            <person name="Jagels K."/>
            <person name="James K.D."/>
            <person name="Jones L."/>
            <person name="Jones M."/>
            <person name="Leather S."/>
            <person name="McDonald S."/>
            <person name="McLean J."/>
            <person name="Mooney P."/>
            <person name="Moule S."/>
            <person name="Mungall K.L."/>
            <person name="Murphy L.D."/>
            <person name="Niblett D."/>
            <person name="Odell C."/>
            <person name="Oliver K."/>
            <person name="O'Neil S."/>
            <person name="Pearson D."/>
            <person name="Quail M.A."/>
            <person name="Rabbinowitsch E."/>
            <person name="Rutherford K.M."/>
            <person name="Rutter S."/>
            <person name="Saunders D."/>
            <person name="Seeger K."/>
            <person name="Sharp S."/>
            <person name="Skelton J."/>
            <person name="Simmonds M.N."/>
            <person name="Squares R."/>
            <person name="Squares S."/>
            <person name="Stevens K."/>
            <person name="Taylor K."/>
            <person name="Taylor R.G."/>
            <person name="Tivey A."/>
            <person name="Walsh S.V."/>
            <person name="Warren T."/>
            <person name="Whitehead S."/>
            <person name="Woodward J.R."/>
            <person name="Volckaert G."/>
            <person name="Aert R."/>
            <person name="Robben J."/>
            <person name="Grymonprez B."/>
            <person name="Weltjens I."/>
            <person name="Vanstreels E."/>
            <person name="Rieger M."/>
            <person name="Schaefer M."/>
            <person name="Mueller-Auer S."/>
            <person name="Gabel C."/>
            <person name="Fuchs M."/>
            <person name="Duesterhoeft A."/>
            <person name="Fritzc C."/>
            <person name="Holzer E."/>
            <person name="Moestl D."/>
            <person name="Hilbert H."/>
            <person name="Borzym K."/>
            <person name="Langer I."/>
            <person name="Beck A."/>
            <person name="Lehrach H."/>
            <person name="Reinhardt R."/>
            <person name="Pohl T.M."/>
            <person name="Eger P."/>
            <person name="Zimmermann W."/>
            <person name="Wedler H."/>
            <person name="Wambutt R."/>
            <person name="Purnelle B."/>
            <person name="Goffeau A."/>
            <person name="Cadieu E."/>
            <person name="Dreano S."/>
            <person name="Gloux S."/>
            <person name="Lelaure V."/>
            <person name="Mottier S."/>
            <person name="Galibert F."/>
            <person name="Aves S.J."/>
            <person name="Xiang Z."/>
            <person name="Hunt C."/>
            <person name="Moore K."/>
            <person name="Hurst S.M."/>
            <person name="Lucas M."/>
            <person name="Rochet M."/>
            <person name="Gaillardin C."/>
            <person name="Tallada V.A."/>
            <person name="Garzon A."/>
            <person name="Thode G."/>
            <person name="Daga R.R."/>
            <person name="Cruzado L."/>
            <person name="Jimenez J."/>
            <person name="Sanchez M."/>
            <person name="del Rey F."/>
            <person name="Benito J."/>
            <person name="Dominguez A."/>
            <person name="Revuelta J.L."/>
            <person name="Moreno S."/>
            <person name="Armstrong J."/>
            <person name="Forsburg S.L."/>
            <person name="Cerutti L."/>
            <person name="Lowe T."/>
            <person name="McCombie W.R."/>
            <person name="Paulsen I."/>
            <person name="Potashkin J."/>
            <person name="Shpakovski G.V."/>
            <person name="Ussery D."/>
            <person name="Barrell B.G."/>
            <person name="Nurse P."/>
        </authorList>
    </citation>
    <scope>NUCLEOTIDE SEQUENCE [LARGE SCALE GENOMIC DNA]</scope>
    <source>
        <strain>972 / ATCC 24843</strain>
    </source>
</reference>
<reference key="2">
    <citation type="journal article" date="2006" name="Nat. Biotechnol.">
        <title>ORFeome cloning and global analysis of protein localization in the fission yeast Schizosaccharomyces pombe.</title>
        <authorList>
            <person name="Matsuyama A."/>
            <person name="Arai R."/>
            <person name="Yashiroda Y."/>
            <person name="Shirai A."/>
            <person name="Kamata A."/>
            <person name="Sekido S."/>
            <person name="Kobayashi Y."/>
            <person name="Hashimoto A."/>
            <person name="Hamamoto M."/>
            <person name="Hiraoka Y."/>
            <person name="Horinouchi S."/>
            <person name="Yoshida M."/>
        </authorList>
    </citation>
    <scope>SUBCELLULAR LOCATION [LARGE SCALE ANALYSIS]</scope>
</reference>
<reference key="3">
    <citation type="journal article" date="2008" name="J. Proteome Res.">
        <title>Phosphoproteome analysis of fission yeast.</title>
        <authorList>
            <person name="Wilson-Grady J.T."/>
            <person name="Villen J."/>
            <person name="Gygi S.P."/>
        </authorList>
    </citation>
    <scope>PHOSPHORYLATION [LARGE SCALE ANALYSIS] AT THR-56</scope>
    <scope>IDENTIFICATION BY MASS SPECTROMETRY</scope>
</reference>
<sequence length="108" mass="12055">MNRRVTLGALAAAVGVGYYMTRHNRQASSRLEQKNAEIVRAVENEGQRFDKAVGETTEKAKSYLQSGKERVVDELDKPRENVKNVLSEAQAKGTEQAEALKKGTSKWF</sequence>
<organism>
    <name type="scientific">Schizosaccharomyces pombe (strain 972 / ATCC 24843)</name>
    <name type="common">Fission yeast</name>
    <dbReference type="NCBI Taxonomy" id="284812"/>
    <lineage>
        <taxon>Eukaryota</taxon>
        <taxon>Fungi</taxon>
        <taxon>Dikarya</taxon>
        <taxon>Ascomycota</taxon>
        <taxon>Taphrinomycotina</taxon>
        <taxon>Schizosaccharomycetes</taxon>
        <taxon>Schizosaccharomycetales</taxon>
        <taxon>Schizosaccharomycetaceae</taxon>
        <taxon>Schizosaccharomyces</taxon>
    </lineage>
</organism>
<gene>
    <name type="ORF">SPCC1393.12</name>
</gene>
<keyword id="KW-0963">Cytoplasm</keyword>
<keyword id="KW-0597">Phosphoprotein</keyword>
<keyword id="KW-1185">Reference proteome</keyword>
<proteinExistence type="evidence at protein level"/>
<dbReference type="EMBL" id="CU329672">
    <property type="protein sequence ID" value="CAB38167.1"/>
    <property type="molecule type" value="Genomic_DNA"/>
</dbReference>
<dbReference type="PIR" id="T40960">
    <property type="entry name" value="T40960"/>
</dbReference>
<dbReference type="RefSeq" id="NP_587970.1">
    <property type="nucleotide sequence ID" value="NM_001022961.2"/>
</dbReference>
<dbReference type="SMR" id="O94724"/>
<dbReference type="BioGRID" id="275469">
    <property type="interactions" value="1"/>
</dbReference>
<dbReference type="STRING" id="284812.O94724"/>
<dbReference type="iPTMnet" id="O94724"/>
<dbReference type="PaxDb" id="4896-SPCC1393.12.1"/>
<dbReference type="EnsemblFungi" id="SPCC1393.12.1">
    <property type="protein sequence ID" value="SPCC1393.12.1:pep"/>
    <property type="gene ID" value="SPCC1393.12"/>
</dbReference>
<dbReference type="KEGG" id="spo:2538891"/>
<dbReference type="PomBase" id="SPCC1393.12"/>
<dbReference type="VEuPathDB" id="FungiDB:SPCC1393.12"/>
<dbReference type="HOGENOM" id="CLU_173503_0_0_1"/>
<dbReference type="InParanoid" id="O94724"/>
<dbReference type="OMA" id="AVAYMFM"/>
<dbReference type="PRO" id="PR:O94724"/>
<dbReference type="Proteomes" id="UP000002485">
    <property type="component" value="Chromosome III"/>
</dbReference>
<dbReference type="GO" id="GO:0005737">
    <property type="term" value="C:cytoplasm"/>
    <property type="evidence" value="ECO:0007005"/>
    <property type="project" value="PomBase"/>
</dbReference>
<comment type="subcellular location">
    <subcellularLocation>
        <location evidence="2">Cytoplasm</location>
    </subcellularLocation>
</comment>
<protein>
    <recommendedName>
        <fullName>Uncharacterized protein C1393.12</fullName>
    </recommendedName>
</protein>
<feature type="chain" id="PRO_0000303938" description="Uncharacterized protein C1393.12">
    <location>
        <begin position="1"/>
        <end position="108"/>
    </location>
</feature>
<feature type="region of interest" description="Disordered" evidence="1">
    <location>
        <begin position="89"/>
        <end position="108"/>
    </location>
</feature>
<feature type="modified residue" description="Phosphothreonine" evidence="3">
    <location>
        <position position="56"/>
    </location>
</feature>
<accession>O94724</accession>
<name>YCFC_SCHPO</name>
<evidence type="ECO:0000256" key="1">
    <source>
        <dbReference type="SAM" id="MobiDB-lite"/>
    </source>
</evidence>
<evidence type="ECO:0000269" key="2">
    <source>
    </source>
</evidence>
<evidence type="ECO:0000269" key="3">
    <source>
    </source>
</evidence>